<comment type="function">
    <text evidence="1">Catalyzes the anti-1,4-elimination of the C-3 phosphate and the C-6 proR hydrogen from 5-enolpyruvylshikimate-3-phosphate (EPSP) to yield chorismate, which is the branch point compound that serves as the starting substrate for the three terminal pathways of aromatic amino acid biosynthesis. This reaction introduces a second double bond into the aromatic ring system.</text>
</comment>
<comment type="catalytic activity">
    <reaction evidence="1">
        <text>5-O-(1-carboxyvinyl)-3-phosphoshikimate = chorismate + phosphate</text>
        <dbReference type="Rhea" id="RHEA:21020"/>
        <dbReference type="ChEBI" id="CHEBI:29748"/>
        <dbReference type="ChEBI" id="CHEBI:43474"/>
        <dbReference type="ChEBI" id="CHEBI:57701"/>
        <dbReference type="EC" id="4.2.3.5"/>
    </reaction>
</comment>
<comment type="cofactor">
    <cofactor evidence="1">
        <name>FMNH2</name>
        <dbReference type="ChEBI" id="CHEBI:57618"/>
    </cofactor>
    <text evidence="1">Reduced FMN (FMNH(2)).</text>
</comment>
<comment type="pathway">
    <text evidence="1">Metabolic intermediate biosynthesis; chorismate biosynthesis; chorismate from D-erythrose 4-phosphate and phosphoenolpyruvate: step 7/7.</text>
</comment>
<comment type="subunit">
    <text evidence="1">Homotetramer.</text>
</comment>
<comment type="similarity">
    <text evidence="1">Belongs to the chorismate synthase family.</text>
</comment>
<gene>
    <name evidence="1" type="primary">aroC</name>
    <name type="ordered locus">Noca_2412</name>
</gene>
<dbReference type="EC" id="4.2.3.5" evidence="1"/>
<dbReference type="EMBL" id="CP000509">
    <property type="protein sequence ID" value="ABL81917.1"/>
    <property type="molecule type" value="Genomic_DNA"/>
</dbReference>
<dbReference type="RefSeq" id="WP_011755858.1">
    <property type="nucleotide sequence ID" value="NC_008699.1"/>
</dbReference>
<dbReference type="SMR" id="A1SJD2"/>
<dbReference type="STRING" id="196162.Noca_2412"/>
<dbReference type="KEGG" id="nca:Noca_2412"/>
<dbReference type="eggNOG" id="COG0082">
    <property type="taxonomic scope" value="Bacteria"/>
</dbReference>
<dbReference type="HOGENOM" id="CLU_034547_2_0_11"/>
<dbReference type="OrthoDB" id="9771806at2"/>
<dbReference type="UniPathway" id="UPA00053">
    <property type="reaction ID" value="UER00090"/>
</dbReference>
<dbReference type="Proteomes" id="UP000000640">
    <property type="component" value="Chromosome"/>
</dbReference>
<dbReference type="GO" id="GO:0005829">
    <property type="term" value="C:cytosol"/>
    <property type="evidence" value="ECO:0007669"/>
    <property type="project" value="TreeGrafter"/>
</dbReference>
<dbReference type="GO" id="GO:0004107">
    <property type="term" value="F:chorismate synthase activity"/>
    <property type="evidence" value="ECO:0007669"/>
    <property type="project" value="UniProtKB-UniRule"/>
</dbReference>
<dbReference type="GO" id="GO:0010181">
    <property type="term" value="F:FMN binding"/>
    <property type="evidence" value="ECO:0007669"/>
    <property type="project" value="TreeGrafter"/>
</dbReference>
<dbReference type="GO" id="GO:0008652">
    <property type="term" value="P:amino acid biosynthetic process"/>
    <property type="evidence" value="ECO:0007669"/>
    <property type="project" value="UniProtKB-KW"/>
</dbReference>
<dbReference type="GO" id="GO:0009073">
    <property type="term" value="P:aromatic amino acid family biosynthetic process"/>
    <property type="evidence" value="ECO:0007669"/>
    <property type="project" value="UniProtKB-KW"/>
</dbReference>
<dbReference type="GO" id="GO:0009423">
    <property type="term" value="P:chorismate biosynthetic process"/>
    <property type="evidence" value="ECO:0007669"/>
    <property type="project" value="UniProtKB-UniRule"/>
</dbReference>
<dbReference type="CDD" id="cd07304">
    <property type="entry name" value="Chorismate_synthase"/>
    <property type="match status" value="1"/>
</dbReference>
<dbReference type="FunFam" id="3.60.150.10:FF:000002">
    <property type="entry name" value="Chorismate synthase"/>
    <property type="match status" value="1"/>
</dbReference>
<dbReference type="Gene3D" id="3.60.150.10">
    <property type="entry name" value="Chorismate synthase AroC"/>
    <property type="match status" value="1"/>
</dbReference>
<dbReference type="HAMAP" id="MF_00300">
    <property type="entry name" value="Chorismate_synth"/>
    <property type="match status" value="1"/>
</dbReference>
<dbReference type="InterPro" id="IPR000453">
    <property type="entry name" value="Chorismate_synth"/>
</dbReference>
<dbReference type="InterPro" id="IPR035904">
    <property type="entry name" value="Chorismate_synth_AroC_sf"/>
</dbReference>
<dbReference type="InterPro" id="IPR020541">
    <property type="entry name" value="Chorismate_synthase_CS"/>
</dbReference>
<dbReference type="NCBIfam" id="TIGR00033">
    <property type="entry name" value="aroC"/>
    <property type="match status" value="1"/>
</dbReference>
<dbReference type="NCBIfam" id="NF003793">
    <property type="entry name" value="PRK05382.1"/>
    <property type="match status" value="1"/>
</dbReference>
<dbReference type="PANTHER" id="PTHR21085">
    <property type="entry name" value="CHORISMATE SYNTHASE"/>
    <property type="match status" value="1"/>
</dbReference>
<dbReference type="PANTHER" id="PTHR21085:SF0">
    <property type="entry name" value="CHORISMATE SYNTHASE"/>
    <property type="match status" value="1"/>
</dbReference>
<dbReference type="Pfam" id="PF01264">
    <property type="entry name" value="Chorismate_synt"/>
    <property type="match status" value="1"/>
</dbReference>
<dbReference type="PIRSF" id="PIRSF001456">
    <property type="entry name" value="Chorismate_synth"/>
    <property type="match status" value="1"/>
</dbReference>
<dbReference type="SUPFAM" id="SSF103263">
    <property type="entry name" value="Chorismate synthase, AroC"/>
    <property type="match status" value="1"/>
</dbReference>
<dbReference type="PROSITE" id="PS00787">
    <property type="entry name" value="CHORISMATE_SYNTHASE_1"/>
    <property type="match status" value="1"/>
</dbReference>
<dbReference type="PROSITE" id="PS00789">
    <property type="entry name" value="CHORISMATE_SYNTHASE_3"/>
    <property type="match status" value="1"/>
</dbReference>
<protein>
    <recommendedName>
        <fullName evidence="1">Chorismate synthase</fullName>
        <shortName evidence="1">CS</shortName>
        <ecNumber evidence="1">4.2.3.5</ecNumber>
    </recommendedName>
    <alternativeName>
        <fullName evidence="1">5-enolpyruvylshikimate-3-phosphate phospholyase</fullName>
    </alternativeName>
</protein>
<proteinExistence type="inferred from homology"/>
<sequence>MLRWLTAGESHGPSLVAILEGLPAHVQVTSDDVADALARRRLGYGRGARMKFERDEVTLVGGIRHGETMGGPVAIEIGNTEWPKWEKVMAADPVDPVELESLARNAPLTRPRPGHADLVGMQKYDFTEARPILERASARETAARVALGRVASNLLEQAVGARIVSHVIELGGVRAPAGLWPQPEDVDRLDDDPVRCLDADTSKLMVEAIDQAHQDGDTLGGVVEVVVHGLPPGLGSHVHWDRRLDARLAGALMGIQAIKGVEVGDGFELAATPGSRAHDEIVSGTDGLRRVSGRSGGTEGGMSTGEVLRVRAAMKPIATVPRALRTVDVATGEAAVAHHQRSDVCAVPAAGIVAEAMVALVLADAVLEKFGGDSVRETRRNAEGYLDTLRFR</sequence>
<name>AROC_NOCSJ</name>
<reference key="1">
    <citation type="submission" date="2006-12" db="EMBL/GenBank/DDBJ databases">
        <title>Complete sequence of chromosome 1 of Nocardioides sp. JS614.</title>
        <authorList>
            <person name="Copeland A."/>
            <person name="Lucas S."/>
            <person name="Lapidus A."/>
            <person name="Barry K."/>
            <person name="Detter J.C."/>
            <person name="Glavina del Rio T."/>
            <person name="Hammon N."/>
            <person name="Israni S."/>
            <person name="Dalin E."/>
            <person name="Tice H."/>
            <person name="Pitluck S."/>
            <person name="Thompson L.S."/>
            <person name="Brettin T."/>
            <person name="Bruce D."/>
            <person name="Han C."/>
            <person name="Tapia R."/>
            <person name="Schmutz J."/>
            <person name="Larimer F."/>
            <person name="Land M."/>
            <person name="Hauser L."/>
            <person name="Kyrpides N."/>
            <person name="Kim E."/>
            <person name="Mattes T."/>
            <person name="Gossett J."/>
            <person name="Richardson P."/>
        </authorList>
    </citation>
    <scope>NUCLEOTIDE SEQUENCE [LARGE SCALE GENOMIC DNA]</scope>
    <source>
        <strain>ATCC BAA-499 / JS614</strain>
    </source>
</reference>
<keyword id="KW-0028">Amino-acid biosynthesis</keyword>
<keyword id="KW-0057">Aromatic amino acid biosynthesis</keyword>
<keyword id="KW-0274">FAD</keyword>
<keyword id="KW-0285">Flavoprotein</keyword>
<keyword id="KW-0288">FMN</keyword>
<keyword id="KW-0456">Lyase</keyword>
<keyword id="KW-0521">NADP</keyword>
<keyword id="KW-1185">Reference proteome</keyword>
<feature type="chain" id="PRO_0000322417" description="Chorismate synthase">
    <location>
        <begin position="1"/>
        <end position="392"/>
    </location>
</feature>
<feature type="binding site" evidence="1">
    <location>
        <position position="40"/>
    </location>
    <ligand>
        <name>NADP(+)</name>
        <dbReference type="ChEBI" id="CHEBI:58349"/>
    </ligand>
</feature>
<feature type="binding site" evidence="1">
    <location>
        <position position="46"/>
    </location>
    <ligand>
        <name>NADP(+)</name>
        <dbReference type="ChEBI" id="CHEBI:58349"/>
    </ligand>
</feature>
<feature type="binding site" evidence="1">
    <location>
        <begin position="135"/>
        <end position="137"/>
    </location>
    <ligand>
        <name>FMN</name>
        <dbReference type="ChEBI" id="CHEBI:58210"/>
    </ligand>
</feature>
<feature type="binding site" evidence="1">
    <location>
        <begin position="256"/>
        <end position="257"/>
    </location>
    <ligand>
        <name>FMN</name>
        <dbReference type="ChEBI" id="CHEBI:58210"/>
    </ligand>
</feature>
<feature type="binding site" evidence="1">
    <location>
        <position position="300"/>
    </location>
    <ligand>
        <name>FMN</name>
        <dbReference type="ChEBI" id="CHEBI:58210"/>
    </ligand>
</feature>
<feature type="binding site" evidence="1">
    <location>
        <begin position="315"/>
        <end position="319"/>
    </location>
    <ligand>
        <name>FMN</name>
        <dbReference type="ChEBI" id="CHEBI:58210"/>
    </ligand>
</feature>
<feature type="binding site" evidence="1">
    <location>
        <position position="341"/>
    </location>
    <ligand>
        <name>FMN</name>
        <dbReference type="ChEBI" id="CHEBI:58210"/>
    </ligand>
</feature>
<evidence type="ECO:0000255" key="1">
    <source>
        <dbReference type="HAMAP-Rule" id="MF_00300"/>
    </source>
</evidence>
<organism>
    <name type="scientific">Nocardioides sp. (strain ATCC BAA-499 / JS614)</name>
    <dbReference type="NCBI Taxonomy" id="196162"/>
    <lineage>
        <taxon>Bacteria</taxon>
        <taxon>Bacillati</taxon>
        <taxon>Actinomycetota</taxon>
        <taxon>Actinomycetes</taxon>
        <taxon>Propionibacteriales</taxon>
        <taxon>Nocardioidaceae</taxon>
        <taxon>Nocardioides</taxon>
    </lineage>
</organism>
<accession>A1SJD2</accession>